<proteinExistence type="inferred from homology"/>
<gene>
    <name evidence="1" type="primary">rpsD</name>
    <name type="ordered locus">Plav_2583</name>
</gene>
<keyword id="KW-1185">Reference proteome</keyword>
<keyword id="KW-0687">Ribonucleoprotein</keyword>
<keyword id="KW-0689">Ribosomal protein</keyword>
<keyword id="KW-0694">RNA-binding</keyword>
<keyword id="KW-0699">rRNA-binding</keyword>
<feature type="chain" id="PRO_0000322317" description="Small ribosomal subunit protein uS4">
    <location>
        <begin position="1"/>
        <end position="206"/>
    </location>
</feature>
<feature type="domain" description="S4 RNA-binding" evidence="1">
    <location>
        <begin position="94"/>
        <end position="154"/>
    </location>
</feature>
<feature type="region of interest" description="Disordered" evidence="2">
    <location>
        <begin position="1"/>
        <end position="46"/>
    </location>
</feature>
<feature type="compositionally biased region" description="Basic and acidic residues" evidence="2">
    <location>
        <begin position="1"/>
        <end position="16"/>
    </location>
</feature>
<evidence type="ECO:0000255" key="1">
    <source>
        <dbReference type="HAMAP-Rule" id="MF_01306"/>
    </source>
</evidence>
<evidence type="ECO:0000256" key="2">
    <source>
        <dbReference type="SAM" id="MobiDB-lite"/>
    </source>
</evidence>
<evidence type="ECO:0000305" key="3"/>
<sequence>MTKRQESKYKIDRRMGENIWGRPKSPVNRREYGPGQHGQRRKGKLSDYGVQLRAKQKLKGFYGNISEKQFRGIYKEANRLRGDTSEILIGLLERRLDAVVYRAKFVMTPFAARQFVGHGHILVNGKRVNVPSYRVREGDVIEVREKSKQLAIVLEASQSAERDTPDYIEVDHDKMVAKFVRIPAFSDVPYAAHMEPNLVIEFYSRS</sequence>
<accession>A7HWA8</accession>
<comment type="function">
    <text evidence="1">One of the primary rRNA binding proteins, it binds directly to 16S rRNA where it nucleates assembly of the body of the 30S subunit.</text>
</comment>
<comment type="function">
    <text evidence="1">With S5 and S12 plays an important role in translational accuracy.</text>
</comment>
<comment type="subunit">
    <text evidence="1">Part of the 30S ribosomal subunit. Contacts protein S5. The interaction surface between S4 and S5 is involved in control of translational fidelity.</text>
</comment>
<comment type="similarity">
    <text evidence="1">Belongs to the universal ribosomal protein uS4 family.</text>
</comment>
<name>RS4_PARL1</name>
<organism>
    <name type="scientific">Parvibaculum lavamentivorans (strain DS-1 / DSM 13023 / NCIMB 13966)</name>
    <dbReference type="NCBI Taxonomy" id="402881"/>
    <lineage>
        <taxon>Bacteria</taxon>
        <taxon>Pseudomonadati</taxon>
        <taxon>Pseudomonadota</taxon>
        <taxon>Alphaproteobacteria</taxon>
        <taxon>Hyphomicrobiales</taxon>
        <taxon>Parvibaculaceae</taxon>
        <taxon>Parvibaculum</taxon>
    </lineage>
</organism>
<reference key="1">
    <citation type="journal article" date="2011" name="Stand. Genomic Sci.">
        <title>Complete genome sequence of Parvibaculum lavamentivorans type strain (DS-1(T)).</title>
        <authorList>
            <person name="Schleheck D."/>
            <person name="Weiss M."/>
            <person name="Pitluck S."/>
            <person name="Bruce D."/>
            <person name="Land M.L."/>
            <person name="Han S."/>
            <person name="Saunders E."/>
            <person name="Tapia R."/>
            <person name="Detter C."/>
            <person name="Brettin T."/>
            <person name="Han J."/>
            <person name="Woyke T."/>
            <person name="Goodwin L."/>
            <person name="Pennacchio L."/>
            <person name="Nolan M."/>
            <person name="Cook A.M."/>
            <person name="Kjelleberg S."/>
            <person name="Thomas T."/>
        </authorList>
    </citation>
    <scope>NUCLEOTIDE SEQUENCE [LARGE SCALE GENOMIC DNA]</scope>
    <source>
        <strain>DS-1 / DSM 13023 / NCIMB 13966</strain>
    </source>
</reference>
<dbReference type="EMBL" id="CP000774">
    <property type="protein sequence ID" value="ABS64191.1"/>
    <property type="molecule type" value="Genomic_DNA"/>
</dbReference>
<dbReference type="RefSeq" id="WP_012111503.1">
    <property type="nucleotide sequence ID" value="NC_009719.1"/>
</dbReference>
<dbReference type="SMR" id="A7HWA8"/>
<dbReference type="STRING" id="402881.Plav_2583"/>
<dbReference type="KEGG" id="pla:Plav_2583"/>
<dbReference type="eggNOG" id="COG0522">
    <property type="taxonomic scope" value="Bacteria"/>
</dbReference>
<dbReference type="HOGENOM" id="CLU_092403_0_0_5"/>
<dbReference type="OrthoDB" id="9803672at2"/>
<dbReference type="Proteomes" id="UP000006377">
    <property type="component" value="Chromosome"/>
</dbReference>
<dbReference type="GO" id="GO:0015935">
    <property type="term" value="C:small ribosomal subunit"/>
    <property type="evidence" value="ECO:0007669"/>
    <property type="project" value="InterPro"/>
</dbReference>
<dbReference type="GO" id="GO:0019843">
    <property type="term" value="F:rRNA binding"/>
    <property type="evidence" value="ECO:0007669"/>
    <property type="project" value="UniProtKB-UniRule"/>
</dbReference>
<dbReference type="GO" id="GO:0003735">
    <property type="term" value="F:structural constituent of ribosome"/>
    <property type="evidence" value="ECO:0007669"/>
    <property type="project" value="InterPro"/>
</dbReference>
<dbReference type="GO" id="GO:0042274">
    <property type="term" value="P:ribosomal small subunit biogenesis"/>
    <property type="evidence" value="ECO:0007669"/>
    <property type="project" value="TreeGrafter"/>
</dbReference>
<dbReference type="GO" id="GO:0006412">
    <property type="term" value="P:translation"/>
    <property type="evidence" value="ECO:0007669"/>
    <property type="project" value="UniProtKB-UniRule"/>
</dbReference>
<dbReference type="CDD" id="cd00165">
    <property type="entry name" value="S4"/>
    <property type="match status" value="1"/>
</dbReference>
<dbReference type="FunFam" id="3.10.290.10:FF:000001">
    <property type="entry name" value="30S ribosomal protein S4"/>
    <property type="match status" value="1"/>
</dbReference>
<dbReference type="Gene3D" id="1.10.1050.10">
    <property type="entry name" value="Ribosomal Protein S4 Delta 41, Chain A, domain 1"/>
    <property type="match status" value="1"/>
</dbReference>
<dbReference type="Gene3D" id="3.10.290.10">
    <property type="entry name" value="RNA-binding S4 domain"/>
    <property type="match status" value="1"/>
</dbReference>
<dbReference type="HAMAP" id="MF_01306_B">
    <property type="entry name" value="Ribosomal_uS4_B"/>
    <property type="match status" value="1"/>
</dbReference>
<dbReference type="InterPro" id="IPR022801">
    <property type="entry name" value="Ribosomal_uS4"/>
</dbReference>
<dbReference type="InterPro" id="IPR005709">
    <property type="entry name" value="Ribosomal_uS4_bac-type"/>
</dbReference>
<dbReference type="InterPro" id="IPR018079">
    <property type="entry name" value="Ribosomal_uS4_CS"/>
</dbReference>
<dbReference type="InterPro" id="IPR001912">
    <property type="entry name" value="Ribosomal_uS4_N"/>
</dbReference>
<dbReference type="InterPro" id="IPR002942">
    <property type="entry name" value="S4_RNA-bd"/>
</dbReference>
<dbReference type="InterPro" id="IPR036986">
    <property type="entry name" value="S4_RNA-bd_sf"/>
</dbReference>
<dbReference type="NCBIfam" id="NF003717">
    <property type="entry name" value="PRK05327.1"/>
    <property type="match status" value="1"/>
</dbReference>
<dbReference type="NCBIfam" id="TIGR01017">
    <property type="entry name" value="rpsD_bact"/>
    <property type="match status" value="1"/>
</dbReference>
<dbReference type="PANTHER" id="PTHR11831">
    <property type="entry name" value="30S 40S RIBOSOMAL PROTEIN"/>
    <property type="match status" value="1"/>
</dbReference>
<dbReference type="PANTHER" id="PTHR11831:SF4">
    <property type="entry name" value="SMALL RIBOSOMAL SUBUNIT PROTEIN US4M"/>
    <property type="match status" value="1"/>
</dbReference>
<dbReference type="Pfam" id="PF00163">
    <property type="entry name" value="Ribosomal_S4"/>
    <property type="match status" value="1"/>
</dbReference>
<dbReference type="Pfam" id="PF01479">
    <property type="entry name" value="S4"/>
    <property type="match status" value="1"/>
</dbReference>
<dbReference type="SMART" id="SM01390">
    <property type="entry name" value="Ribosomal_S4"/>
    <property type="match status" value="1"/>
</dbReference>
<dbReference type="SMART" id="SM00363">
    <property type="entry name" value="S4"/>
    <property type="match status" value="1"/>
</dbReference>
<dbReference type="SUPFAM" id="SSF55174">
    <property type="entry name" value="Alpha-L RNA-binding motif"/>
    <property type="match status" value="1"/>
</dbReference>
<dbReference type="PROSITE" id="PS00632">
    <property type="entry name" value="RIBOSOMAL_S4"/>
    <property type="match status" value="1"/>
</dbReference>
<dbReference type="PROSITE" id="PS50889">
    <property type="entry name" value="S4"/>
    <property type="match status" value="1"/>
</dbReference>
<protein>
    <recommendedName>
        <fullName evidence="1">Small ribosomal subunit protein uS4</fullName>
    </recommendedName>
    <alternativeName>
        <fullName evidence="3">30S ribosomal protein S4</fullName>
    </alternativeName>
</protein>